<reference key="1">
    <citation type="journal article" date="2000" name="Nature">
        <title>DNA sequence of both chromosomes of the cholera pathogen Vibrio cholerae.</title>
        <authorList>
            <person name="Heidelberg J.F."/>
            <person name="Eisen J.A."/>
            <person name="Nelson W.C."/>
            <person name="Clayton R.A."/>
            <person name="Gwinn M.L."/>
            <person name="Dodson R.J."/>
            <person name="Haft D.H."/>
            <person name="Hickey E.K."/>
            <person name="Peterson J.D."/>
            <person name="Umayam L.A."/>
            <person name="Gill S.R."/>
            <person name="Nelson K.E."/>
            <person name="Read T.D."/>
            <person name="Tettelin H."/>
            <person name="Richardson D.L."/>
            <person name="Ermolaeva M.D."/>
            <person name="Vamathevan J.J."/>
            <person name="Bass S."/>
            <person name="Qin H."/>
            <person name="Dragoi I."/>
            <person name="Sellers P."/>
            <person name="McDonald L.A."/>
            <person name="Utterback T.R."/>
            <person name="Fleischmann R.D."/>
            <person name="Nierman W.C."/>
            <person name="White O."/>
            <person name="Salzberg S.L."/>
            <person name="Smith H.O."/>
            <person name="Colwell R.R."/>
            <person name="Mekalanos J.J."/>
            <person name="Venter J.C."/>
            <person name="Fraser C.M."/>
        </authorList>
    </citation>
    <scope>NUCLEOTIDE SEQUENCE [LARGE SCALE GENOMIC DNA]</scope>
    <source>
        <strain>ATCC 39315 / El Tor Inaba N16961</strain>
    </source>
</reference>
<organism>
    <name type="scientific">Vibrio cholerae serotype O1 (strain ATCC 39315 / El Tor Inaba N16961)</name>
    <dbReference type="NCBI Taxonomy" id="243277"/>
    <lineage>
        <taxon>Bacteria</taxon>
        <taxon>Pseudomonadati</taxon>
        <taxon>Pseudomonadota</taxon>
        <taxon>Gammaproteobacteria</taxon>
        <taxon>Vibrionales</taxon>
        <taxon>Vibrionaceae</taxon>
        <taxon>Vibrio</taxon>
    </lineage>
</organism>
<sequence>MKFFPTRTLLCLCIAAPCLPAIAQNDPIELPDIGTVAGSTLTIDQELIYGDAYMRMLRNNQPVINDPVLNEYIDNLGHRLVASANDVKTPFTFFMIRDRNINAFAFFGGYVALHSGLFLHAQSESELASVMAHEIAHVTQRHLARSMEEQARRSPATIAALAGSLLLAIAAPEAGIAAINATMAGSIQGQINYTRSNEKEADRFGIATLAKAGFDANAMPQFFTRLADEYRYASKPPPMLLTHPLPEDRITDSRERARQYPPLKLAPHLDYHLARARIIARYAGIDADAALDWFARSEKKIDATLQPSIQYGKALVYLDLKQFDKAEPLLTQLVKEQPDNHFYLDAISDLYIELKQADKAQSLLEKALKQTPNNSVLTINYANVLLKQDKFTDAIRILQRYTHDNPNDINGWQLLSEANSRLGNSAEDLAARGEIMALQANWNKAIQFYTQASQLVELGSLAQARYDARIDQLMVQRERFLSLQ</sequence>
<name>BEPA_VIBCH</name>
<gene>
    <name type="ordered locus">VC_2164</name>
</gene>
<feature type="signal peptide" evidence="1">
    <location>
        <begin position="1"/>
        <end position="23"/>
    </location>
</feature>
<feature type="chain" id="PRO_0000035701" description="Putative beta-barrel assembly-enhancing protease">
    <location>
        <begin position="24"/>
        <end position="484"/>
    </location>
</feature>
<feature type="repeat" description="TPR 1">
    <location>
        <begin position="307"/>
        <end position="340"/>
    </location>
</feature>
<feature type="repeat" description="TPR 2">
    <location>
        <begin position="341"/>
        <end position="374"/>
    </location>
</feature>
<feature type="repeat" description="TPR 3">
    <location>
        <begin position="376"/>
        <end position="408"/>
    </location>
</feature>
<feature type="repeat" description="TPR 4">
    <location>
        <begin position="426"/>
        <end position="459"/>
    </location>
</feature>
<feature type="active site" evidence="1">
    <location>
        <position position="134"/>
    </location>
</feature>
<feature type="active site" description="Proton donor" evidence="1">
    <location>
        <position position="202"/>
    </location>
</feature>
<feature type="binding site" evidence="1">
    <location>
        <position position="133"/>
    </location>
    <ligand>
        <name>Zn(2+)</name>
        <dbReference type="ChEBI" id="CHEBI:29105"/>
        <note>catalytic</note>
    </ligand>
</feature>
<feature type="binding site" evidence="1">
    <location>
        <position position="137"/>
    </location>
    <ligand>
        <name>Zn(2+)</name>
        <dbReference type="ChEBI" id="CHEBI:29105"/>
        <note>catalytic</note>
    </ligand>
</feature>
<feature type="binding site" evidence="1">
    <location>
        <position position="198"/>
    </location>
    <ligand>
        <name>Zn(2+)</name>
        <dbReference type="ChEBI" id="CHEBI:29105"/>
        <note>catalytic</note>
    </ligand>
</feature>
<dbReference type="EC" id="3.4.-.-" evidence="1"/>
<dbReference type="EMBL" id="AE003852">
    <property type="protein sequence ID" value="AAF95309.1"/>
    <property type="molecule type" value="Genomic_DNA"/>
</dbReference>
<dbReference type="PIR" id="E82110">
    <property type="entry name" value="E82110"/>
</dbReference>
<dbReference type="RefSeq" id="NP_231795.1">
    <property type="nucleotide sequence ID" value="NC_002505.1"/>
</dbReference>
<dbReference type="RefSeq" id="WP_000667946.1">
    <property type="nucleotide sequence ID" value="NZ_LT906614.1"/>
</dbReference>
<dbReference type="SMR" id="Q9KQ40"/>
<dbReference type="STRING" id="243277.VC_2164"/>
<dbReference type="MEROPS" id="M48.023"/>
<dbReference type="DNASU" id="2613300"/>
<dbReference type="EnsemblBacteria" id="AAF95309">
    <property type="protein sequence ID" value="AAF95309"/>
    <property type="gene ID" value="VC_2164"/>
</dbReference>
<dbReference type="KEGG" id="vch:VC_2164"/>
<dbReference type="PATRIC" id="fig|243277.26.peg.2065"/>
<dbReference type="eggNOG" id="COG4783">
    <property type="taxonomic scope" value="Bacteria"/>
</dbReference>
<dbReference type="HOGENOM" id="CLU_030556_1_1_6"/>
<dbReference type="Proteomes" id="UP000000584">
    <property type="component" value="Chromosome 1"/>
</dbReference>
<dbReference type="GO" id="GO:0016020">
    <property type="term" value="C:membrane"/>
    <property type="evidence" value="ECO:0000318"/>
    <property type="project" value="GO_Central"/>
</dbReference>
<dbReference type="GO" id="GO:0042597">
    <property type="term" value="C:periplasmic space"/>
    <property type="evidence" value="ECO:0007669"/>
    <property type="project" value="UniProtKB-SubCell"/>
</dbReference>
<dbReference type="GO" id="GO:0004222">
    <property type="term" value="F:metalloendopeptidase activity"/>
    <property type="evidence" value="ECO:0000318"/>
    <property type="project" value="GO_Central"/>
</dbReference>
<dbReference type="GO" id="GO:0008270">
    <property type="term" value="F:zinc ion binding"/>
    <property type="evidence" value="ECO:0007669"/>
    <property type="project" value="UniProtKB-UniRule"/>
</dbReference>
<dbReference type="GO" id="GO:0061077">
    <property type="term" value="P:chaperone-mediated protein folding"/>
    <property type="evidence" value="ECO:0007669"/>
    <property type="project" value="InterPro"/>
</dbReference>
<dbReference type="GO" id="GO:0051603">
    <property type="term" value="P:proteolysis involved in protein catabolic process"/>
    <property type="evidence" value="ECO:0000318"/>
    <property type="project" value="GO_Central"/>
</dbReference>
<dbReference type="CDD" id="cd07333">
    <property type="entry name" value="M48C_bepA_like"/>
    <property type="match status" value="1"/>
</dbReference>
<dbReference type="Gene3D" id="3.30.2010.10">
    <property type="entry name" value="Metalloproteases ('zincins'), catalytic domain"/>
    <property type="match status" value="1"/>
</dbReference>
<dbReference type="Gene3D" id="1.25.40.10">
    <property type="entry name" value="Tetratricopeptide repeat domain"/>
    <property type="match status" value="1"/>
</dbReference>
<dbReference type="HAMAP" id="MF_00997">
    <property type="entry name" value="Protease_BepA"/>
    <property type="match status" value="1"/>
</dbReference>
<dbReference type="InterPro" id="IPR051156">
    <property type="entry name" value="Mito/Outer_Membr_Metalloprot"/>
</dbReference>
<dbReference type="InterPro" id="IPR001915">
    <property type="entry name" value="Peptidase_M48"/>
</dbReference>
<dbReference type="InterPro" id="IPR030873">
    <property type="entry name" value="Protease_BepA"/>
</dbReference>
<dbReference type="InterPro" id="IPR011990">
    <property type="entry name" value="TPR-like_helical_dom_sf"/>
</dbReference>
<dbReference type="InterPro" id="IPR019734">
    <property type="entry name" value="TPR_rpt"/>
</dbReference>
<dbReference type="PANTHER" id="PTHR22726">
    <property type="entry name" value="METALLOENDOPEPTIDASE OMA1"/>
    <property type="match status" value="1"/>
</dbReference>
<dbReference type="PANTHER" id="PTHR22726:SF1">
    <property type="entry name" value="METALLOENDOPEPTIDASE OMA1, MITOCHONDRIAL"/>
    <property type="match status" value="1"/>
</dbReference>
<dbReference type="Pfam" id="PF01435">
    <property type="entry name" value="Peptidase_M48"/>
    <property type="match status" value="1"/>
</dbReference>
<dbReference type="Pfam" id="PF14559">
    <property type="entry name" value="TPR_19"/>
    <property type="match status" value="1"/>
</dbReference>
<dbReference type="Pfam" id="PF13181">
    <property type="entry name" value="TPR_8"/>
    <property type="match status" value="1"/>
</dbReference>
<dbReference type="SMART" id="SM00028">
    <property type="entry name" value="TPR"/>
    <property type="match status" value="3"/>
</dbReference>
<dbReference type="SUPFAM" id="SSF48452">
    <property type="entry name" value="TPR-like"/>
    <property type="match status" value="1"/>
</dbReference>
<dbReference type="PROSITE" id="PS50293">
    <property type="entry name" value="TPR_REGION"/>
    <property type="match status" value="1"/>
</dbReference>
<accession>Q9KQ40</accession>
<keyword id="KW-0378">Hydrolase</keyword>
<keyword id="KW-0479">Metal-binding</keyword>
<keyword id="KW-0482">Metalloprotease</keyword>
<keyword id="KW-0574">Periplasm</keyword>
<keyword id="KW-0645">Protease</keyword>
<keyword id="KW-1185">Reference proteome</keyword>
<keyword id="KW-0677">Repeat</keyword>
<keyword id="KW-0732">Signal</keyword>
<keyword id="KW-0802">TPR repeat</keyword>
<keyword id="KW-0862">Zinc</keyword>
<proteinExistence type="inferred from homology"/>
<protein>
    <recommendedName>
        <fullName evidence="1">Putative beta-barrel assembly-enhancing protease</fullName>
        <ecNumber evidence="1">3.4.-.-</ecNumber>
    </recommendedName>
</protein>
<evidence type="ECO:0000255" key="1">
    <source>
        <dbReference type="HAMAP-Rule" id="MF_00997"/>
    </source>
</evidence>
<comment type="function">
    <text evidence="1">Functions both as a chaperone and a metalloprotease. Maintains the integrity of the outer membrane by promoting either the assembly or the elimination of outer membrane proteins, depending on their folding state.</text>
</comment>
<comment type="cofactor">
    <cofactor evidence="1">
        <name>Zn(2+)</name>
        <dbReference type="ChEBI" id="CHEBI:29105"/>
    </cofactor>
    <text evidence="1">Binds 1 zinc ion per subunit.</text>
</comment>
<comment type="subcellular location">
    <subcellularLocation>
        <location evidence="1">Periplasm</location>
    </subcellularLocation>
</comment>
<comment type="similarity">
    <text evidence="1">Belongs to the peptidase M48 family. BepA subfamily.</text>
</comment>